<feature type="signal peptide" evidence="3">
    <location>
        <begin position="1"/>
        <end position="20"/>
    </location>
</feature>
<feature type="chain" id="PRO_0000084532" description="Lysozyme 1" evidence="3">
    <location>
        <begin position="21"/>
        <end position="184"/>
    </location>
</feature>
<feature type="domain" description="I-type lysozyme" evidence="2">
    <location>
        <begin position="69"/>
        <end position="184"/>
    </location>
</feature>
<feature type="active site" description="Proton donor" evidence="2">
    <location>
        <position position="84"/>
    </location>
</feature>
<feature type="active site" description="Nucleophile" evidence="2">
    <location>
        <position position="95"/>
    </location>
</feature>
<feature type="binding site" evidence="1">
    <location>
        <begin position="107"/>
        <end position="113"/>
    </location>
    <ligand>
        <name>substrate</name>
    </ligand>
</feature>
<feature type="binding site" evidence="1">
    <location>
        <position position="138"/>
    </location>
    <ligand>
        <name>substrate</name>
    </ligand>
</feature>
<feature type="binding site" evidence="1">
    <location>
        <begin position="159"/>
        <end position="161"/>
    </location>
    <ligand>
        <name>substrate</name>
    </ligand>
</feature>
<feature type="disulfide bond" evidence="2">
    <location>
        <begin position="76"/>
        <end position="152"/>
    </location>
</feature>
<feature type="disulfide bond" evidence="2">
    <location>
        <begin position="81"/>
        <end position="87"/>
    </location>
</feature>
<feature type="disulfide bond" evidence="2">
    <location>
        <begin position="92"/>
        <end position="101"/>
    </location>
</feature>
<feature type="disulfide bond" evidence="2">
    <location>
        <begin position="114"/>
        <end position="134"/>
    </location>
</feature>
<feature type="disulfide bond" evidence="2">
    <location>
        <begin position="124"/>
        <end position="130"/>
    </location>
</feature>
<feature type="disulfide bond" evidence="2">
    <location>
        <begin position="148"/>
        <end position="166"/>
    </location>
</feature>
<feature type="sequence conflict" description="In Ref. 2; AA sequence." evidence="6" ref="2">
    <original>Y</original>
    <variation>T</variation>
    <location>
        <position position="43"/>
    </location>
</feature>
<feature type="sequence conflict" description="In Ref. 2; AA sequence." evidence="6" ref="2">
    <original>Q</original>
    <variation>K</variation>
    <location>
        <position position="75"/>
    </location>
</feature>
<feature type="sequence conflict" description="In Ref. 2; AA sequence." evidence="6" ref="2">
    <original>Q</original>
    <variation>K</variation>
    <location>
        <position position="122"/>
    </location>
</feature>
<feature type="sequence conflict" description="In Ref. 2; AA sequence." evidence="6" ref="2">
    <original>L</original>
    <variation>I</variation>
    <location>
        <position position="128"/>
    </location>
</feature>
<name>LYS1_CRAVI</name>
<reference evidence="6" key="1">
    <citation type="submission" date="2005-03" db="EMBL/GenBank/DDBJ databases">
        <title>Lysozyme gene in the eastern oyster, Crassostrea virginica.</title>
        <authorList>
            <person name="Itoh N."/>
            <person name="Xue Q.-G."/>
            <person name="Cooper R.K."/>
            <person name="La Peyre J.F."/>
        </authorList>
    </citation>
    <scope>NUCLEOTIDE SEQUENCE [MRNA]</scope>
</reference>
<reference evidence="6" key="2">
    <citation type="journal article" date="2004" name="Comp. Biochem. Physiol.">
        <title>Purification and characterization of lysozyme from plasma of the eastern oyster (Crassostrea virginica).</title>
        <authorList>
            <person name="Xue Q.-G."/>
            <person name="Schey K.L."/>
            <person name="Volety A.K."/>
            <person name="Chu F.-L."/>
            <person name="La Peyre J.F."/>
        </authorList>
    </citation>
    <scope>PROTEIN SEQUENCE OF 21-85; 109-141; 146-157 AND 168-176</scope>
    <scope>FUNCTION</scope>
    <scope>CATALYTIC ACTIVITY</scope>
    <scope>BIOPHYSICOCHEMICAL PROPERTIES</scope>
    <scope>SUBCELLULAR LOCATION</scope>
    <scope>MASS SPECTROMETRY</scope>
    <source>
        <tissue evidence="3">Hemolymph</tissue>
    </source>
</reference>
<reference evidence="6" key="3">
    <citation type="journal article" date="2007" name="Cell. Mol. Life Sci.">
        <title>A new lysozyme from the eastern oyster (Crassostrea virginica) indicates adaptive evolution of i-type lysozymes.</title>
        <authorList>
            <person name="Xue Q.-G."/>
            <person name="Itoh N."/>
            <person name="Schey K.L."/>
            <person name="Li Y.-L."/>
            <person name="Cooper R.K."/>
            <person name="La Peyre J.F."/>
        </authorList>
    </citation>
    <scope>FUNCTION</scope>
    <scope>TISSUE SPECIFICITY</scope>
</reference>
<organism>
    <name type="scientific">Crassostrea virginica</name>
    <name type="common">Eastern oyster</name>
    <dbReference type="NCBI Taxonomy" id="6565"/>
    <lineage>
        <taxon>Eukaryota</taxon>
        <taxon>Metazoa</taxon>
        <taxon>Spiralia</taxon>
        <taxon>Lophotrochozoa</taxon>
        <taxon>Mollusca</taxon>
        <taxon>Bivalvia</taxon>
        <taxon>Autobranchia</taxon>
        <taxon>Pteriomorphia</taxon>
        <taxon>Ostreida</taxon>
        <taxon>Ostreoidea</taxon>
        <taxon>Ostreidae</taxon>
        <taxon>Crassostrea</taxon>
    </lineage>
</organism>
<proteinExistence type="evidence at protein level"/>
<protein>
    <recommendedName>
        <fullName>Lysozyme 1</fullName>
        <ecNumber evidence="3">3.2.1.17</ecNumber>
    </recommendedName>
    <alternativeName>
        <fullName>1,4-beta-N-acetylmuramidase 1</fullName>
    </alternativeName>
    <alternativeName>
        <fullName evidence="6">Invertebrate-type lysozyme 1</fullName>
    </alternativeName>
    <alternativeName>
        <fullName>cv-lysozyme 1</fullName>
    </alternativeName>
</protein>
<gene>
    <name evidence="5" type="primary">lysoz1</name>
    <name evidence="7" type="synonym">lysoz</name>
</gene>
<sequence length="184" mass="19986">MNGLILFCAVVFATAVCTYGSDAPCLRAGGRCQHDSITCSGRYRTGLCSGGVRRRCCVPSSSNSGSFSTGMVSQQCLRCICNVESGCRPIGCHWDVNSDSCGYFQIKRAYWIDCGSPGGDWQTCANNLACSSRCVQAYMARYHRRSGCSNSCESFARIHNGGPRGCRNSNTEGYWRRVQAQGCN</sequence>
<dbReference type="EC" id="3.2.1.17" evidence="3"/>
<dbReference type="EMBL" id="AB206328">
    <property type="protein sequence ID" value="BAE47520.1"/>
    <property type="molecule type" value="mRNA"/>
</dbReference>
<dbReference type="SMR" id="P83673"/>
<dbReference type="CAZy" id="GH22">
    <property type="family name" value="Glycoside Hydrolase Family 22"/>
</dbReference>
<dbReference type="OrthoDB" id="6337871at2759"/>
<dbReference type="GO" id="GO:0005576">
    <property type="term" value="C:extracellular region"/>
    <property type="evidence" value="ECO:0000314"/>
    <property type="project" value="UniProtKB"/>
</dbReference>
<dbReference type="GO" id="GO:0003796">
    <property type="term" value="F:lysozyme activity"/>
    <property type="evidence" value="ECO:0000314"/>
    <property type="project" value="UniProtKB"/>
</dbReference>
<dbReference type="GO" id="GO:0050829">
    <property type="term" value="P:defense response to Gram-negative bacterium"/>
    <property type="evidence" value="ECO:0000314"/>
    <property type="project" value="UniProtKB"/>
</dbReference>
<dbReference type="GO" id="GO:0050830">
    <property type="term" value="P:defense response to Gram-positive bacterium"/>
    <property type="evidence" value="ECO:0000314"/>
    <property type="project" value="UniProtKB"/>
</dbReference>
<dbReference type="GO" id="GO:0031640">
    <property type="term" value="P:killing of cells of another organism"/>
    <property type="evidence" value="ECO:0007669"/>
    <property type="project" value="UniProtKB-KW"/>
</dbReference>
<dbReference type="CDD" id="cd16890">
    <property type="entry name" value="lyz_i"/>
    <property type="match status" value="1"/>
</dbReference>
<dbReference type="FunFam" id="1.10.530.10:FF:000023">
    <property type="entry name" value="Invertebrate-type lysozyme"/>
    <property type="match status" value="1"/>
</dbReference>
<dbReference type="Gene3D" id="1.10.530.10">
    <property type="match status" value="1"/>
</dbReference>
<dbReference type="InterPro" id="IPR008597">
    <property type="entry name" value="Invert_lysozyme"/>
</dbReference>
<dbReference type="InterPro" id="IPR023346">
    <property type="entry name" value="Lysozyme-like_dom_sf"/>
</dbReference>
<dbReference type="PANTHER" id="PTHR11195">
    <property type="entry name" value="DESTABILASE-RELATED"/>
    <property type="match status" value="1"/>
</dbReference>
<dbReference type="PANTHER" id="PTHR11195:SF13">
    <property type="entry name" value="INVERTEBRATE-TYPE LYSOZYME 2-RELATED"/>
    <property type="match status" value="1"/>
</dbReference>
<dbReference type="Pfam" id="PF05497">
    <property type="entry name" value="Destabilase"/>
    <property type="match status" value="1"/>
</dbReference>
<dbReference type="SUPFAM" id="SSF53955">
    <property type="entry name" value="Lysozyme-like"/>
    <property type="match status" value="1"/>
</dbReference>
<dbReference type="PROSITE" id="PS51909">
    <property type="entry name" value="LYSOZYME_I"/>
    <property type="match status" value="1"/>
</dbReference>
<keyword id="KW-0044">Antibiotic</keyword>
<keyword id="KW-0929">Antimicrobial</keyword>
<keyword id="KW-0081">Bacteriolytic enzyme</keyword>
<keyword id="KW-0903">Direct protein sequencing</keyword>
<keyword id="KW-1015">Disulfide bond</keyword>
<keyword id="KW-0326">Glycosidase</keyword>
<keyword id="KW-0378">Hydrolase</keyword>
<keyword id="KW-0964">Secreted</keyword>
<keyword id="KW-0732">Signal</keyword>
<accession>P83673</accession>
<accession>Q33DU2</accession>
<comment type="function">
    <text evidence="3 4">Has antibacterial activity against the Gram-positive bacteria L.garvieae, M.luteus and Enterococcus sp., and the Gram-negative bacteria E.coli and V.vulnificus. Weak antibacterial activity against the Gram-negative bacterium A.hydrophila. No antibacterial activity detected against the Gram-positive bacterium S.iniae or against the Gram-negative bacterium E.ictaluri. Shows some chitinase activity but no isopeptidase activity.</text>
</comment>
<comment type="catalytic activity">
    <reaction evidence="3">
        <text>Hydrolysis of (1-&gt;4)-beta-linkages between N-acetylmuramic acid and N-acetyl-D-glucosamine residues in a peptidoglycan and between N-acetyl-D-glucosamine residues in chitodextrins.</text>
        <dbReference type="EC" id="3.2.1.17"/>
    </reaction>
</comment>
<comment type="biophysicochemical properties">
    <phDependence>
        <text evidence="3">Optimum pH is 5.5-6.0.</text>
    </phDependence>
    <temperatureDependence>
        <text evidence="3">Activity increases as temperature increases from 0 to 45 degrees Celsius and decreases markedly at temperatures greater than 55 degrees Celsius.</text>
    </temperatureDependence>
</comment>
<comment type="subcellular location">
    <subcellularLocation>
        <location evidence="3">Secreted</location>
    </subcellularLocation>
</comment>
<comment type="tissue specificity">
    <text evidence="4">Hemolymph, labial palps, non-vesiculated cells of mantle connective tissue, cells of interlamellar junctions and epithelia surrounding the water tubes of the gills.</text>
</comment>
<comment type="mass spectrometry" mass="17771.0" method="MALDI" evidence="3"/>
<comment type="mass spectrometry" mass="17861.0" method="MALDI" evidence="3"/>
<comment type="similarity">
    <text evidence="2">Belongs to the glycosyl hydrolase 22 family. Type-I lysozyme subfamily.</text>
</comment>
<evidence type="ECO:0000250" key="1">
    <source>
        <dbReference type="UniProtKB" id="Q8IU26"/>
    </source>
</evidence>
<evidence type="ECO:0000255" key="2">
    <source>
        <dbReference type="PROSITE-ProRule" id="PRU01257"/>
    </source>
</evidence>
<evidence type="ECO:0000269" key="3">
    <source>
    </source>
</evidence>
<evidence type="ECO:0000269" key="4">
    <source>
    </source>
</evidence>
<evidence type="ECO:0000303" key="5">
    <source>
    </source>
</evidence>
<evidence type="ECO:0000305" key="6"/>
<evidence type="ECO:0000312" key="7">
    <source>
        <dbReference type="EMBL" id="BAE47520.1"/>
    </source>
</evidence>